<feature type="chain" id="PRO_0000407895" description="Ribonuclease VapC41">
    <location>
        <begin position="1"/>
        <end position="146"/>
    </location>
</feature>
<feature type="domain" description="PINc" evidence="1">
    <location>
        <begin position="3"/>
        <end position="142"/>
    </location>
</feature>
<feature type="binding site" evidence="1">
    <location>
        <position position="5"/>
    </location>
    <ligand>
        <name>Mg(2+)</name>
        <dbReference type="ChEBI" id="CHEBI:18420"/>
    </ligand>
</feature>
<feature type="binding site" evidence="1">
    <location>
        <position position="112"/>
    </location>
    <ligand>
        <name>Mg(2+)</name>
        <dbReference type="ChEBI" id="CHEBI:18420"/>
    </ligand>
</feature>
<reference key="1">
    <citation type="journal article" date="1998" name="Nature">
        <title>Deciphering the biology of Mycobacterium tuberculosis from the complete genome sequence.</title>
        <authorList>
            <person name="Cole S.T."/>
            <person name="Brosch R."/>
            <person name="Parkhill J."/>
            <person name="Garnier T."/>
            <person name="Churcher C.M."/>
            <person name="Harris D.E."/>
            <person name="Gordon S.V."/>
            <person name="Eiglmeier K."/>
            <person name="Gas S."/>
            <person name="Barry C.E. III"/>
            <person name="Tekaia F."/>
            <person name="Badcock K."/>
            <person name="Basham D."/>
            <person name="Brown D."/>
            <person name="Chillingworth T."/>
            <person name="Connor R."/>
            <person name="Davies R.M."/>
            <person name="Devlin K."/>
            <person name="Feltwell T."/>
            <person name="Gentles S."/>
            <person name="Hamlin N."/>
            <person name="Holroyd S."/>
            <person name="Hornsby T."/>
            <person name="Jagels K."/>
            <person name="Krogh A."/>
            <person name="McLean J."/>
            <person name="Moule S."/>
            <person name="Murphy L.D."/>
            <person name="Oliver S."/>
            <person name="Osborne J."/>
            <person name="Quail M.A."/>
            <person name="Rajandream M.A."/>
            <person name="Rogers J."/>
            <person name="Rutter S."/>
            <person name="Seeger K."/>
            <person name="Skelton S."/>
            <person name="Squares S."/>
            <person name="Squares R."/>
            <person name="Sulston J.E."/>
            <person name="Taylor K."/>
            <person name="Whitehead S."/>
            <person name="Barrell B.G."/>
        </authorList>
    </citation>
    <scope>NUCLEOTIDE SEQUENCE [LARGE SCALE GENOMIC DNA]</scope>
    <source>
        <strain>ATCC 25618 / H37Rv</strain>
    </source>
</reference>
<reference key="2">
    <citation type="journal article" date="2009" name="PLoS Genet.">
        <title>Comprehensive functional analysis of Mycobacterium tuberculosis toxin-antitoxin systems: implications for pathogenesis, stress responses, and evolution.</title>
        <authorList>
            <person name="Ramage H.R."/>
            <person name="Connolly L.E."/>
            <person name="Cox J.S."/>
        </authorList>
    </citation>
    <scope>EXPRESSION IN M.SMEGMATIS</scope>
    <scope>FUNCTION AS A TOXIN</scope>
    <source>
        <strain>ATCC 35801 / TMC 107 / Erdman</strain>
    </source>
</reference>
<reference key="3">
    <citation type="journal article" date="2011" name="Mol. Cell. Proteomics">
        <title>Proteogenomic analysis of Mycobacterium tuberculosis by high resolution mass spectrometry.</title>
        <authorList>
            <person name="Kelkar D.S."/>
            <person name="Kumar D."/>
            <person name="Kumar P."/>
            <person name="Balakrishnan L."/>
            <person name="Muthusamy B."/>
            <person name="Yadav A.K."/>
            <person name="Shrivastava P."/>
            <person name="Marimuthu A."/>
            <person name="Anand S."/>
            <person name="Sundaram H."/>
            <person name="Kingsbury R."/>
            <person name="Harsha H.C."/>
            <person name="Nair B."/>
            <person name="Prasad T.S."/>
            <person name="Chauhan D.S."/>
            <person name="Katoch K."/>
            <person name="Katoch V.M."/>
            <person name="Kumar P."/>
            <person name="Chaerkady R."/>
            <person name="Ramachandran S."/>
            <person name="Dash D."/>
            <person name="Pandey A."/>
        </authorList>
    </citation>
    <scope>IDENTIFICATION BY MASS SPECTROMETRY [LARGE SCALE ANALYSIS]</scope>
    <source>
        <strain>ATCC 25618 / H37Rv</strain>
    </source>
</reference>
<reference key="4">
    <citation type="journal article" date="2013" name="Mol. Cell. Proteomics">
        <title>Proteomic profiling of Mycobacterium tuberculosis identifies nutrient-starvation-responsive toxin-antitoxin systems.</title>
        <authorList>
            <person name="Albrethsen J."/>
            <person name="Agner J."/>
            <person name="Piersma S.R."/>
            <person name="Hoejrup P."/>
            <person name="Pham T.V."/>
            <person name="Weldingh K."/>
            <person name="Jimenez C.R."/>
            <person name="Andersen P."/>
            <person name="Rosenkrands I."/>
        </authorList>
    </citation>
    <scope>IDENTIFICATION BY MASS SPECTROMETRY</scope>
    <scope>SUBCELLULAR LOCATION</scope>
    <source>
        <strain>ATCC 27294 / TMC 102 / H37Rv</strain>
    </source>
</reference>
<dbReference type="EC" id="3.1.-.-" evidence="1"/>
<dbReference type="EMBL" id="AL123456">
    <property type="protein sequence ID" value="CCP45399.1"/>
    <property type="molecule type" value="Genomic_DNA"/>
</dbReference>
<dbReference type="PIR" id="E70500">
    <property type="entry name" value="E70500"/>
</dbReference>
<dbReference type="RefSeq" id="NP_217118.1">
    <property type="nucleotide sequence ID" value="NC_000962.3"/>
</dbReference>
<dbReference type="RefSeq" id="WP_003413460.1">
    <property type="nucleotide sequence ID" value="NZ_NVQJ01000023.1"/>
</dbReference>
<dbReference type="SMR" id="P9WF59"/>
<dbReference type="STRING" id="83332.Rv2602"/>
<dbReference type="PaxDb" id="83332-Rv2602"/>
<dbReference type="DNASU" id="888186"/>
<dbReference type="GeneID" id="888186"/>
<dbReference type="KEGG" id="mtu:Rv2602"/>
<dbReference type="KEGG" id="mtv:RVBD_2602"/>
<dbReference type="TubercuList" id="Rv2602"/>
<dbReference type="eggNOG" id="COG1848">
    <property type="taxonomic scope" value="Bacteria"/>
</dbReference>
<dbReference type="InParanoid" id="P9WF59"/>
<dbReference type="OrthoDB" id="128866at2"/>
<dbReference type="Proteomes" id="UP000001584">
    <property type="component" value="Chromosome"/>
</dbReference>
<dbReference type="GO" id="GO:0005576">
    <property type="term" value="C:extracellular region"/>
    <property type="evidence" value="ECO:0007669"/>
    <property type="project" value="UniProtKB-SubCell"/>
</dbReference>
<dbReference type="GO" id="GO:0000287">
    <property type="term" value="F:magnesium ion binding"/>
    <property type="evidence" value="ECO:0007669"/>
    <property type="project" value="UniProtKB-UniRule"/>
</dbReference>
<dbReference type="GO" id="GO:0004540">
    <property type="term" value="F:RNA nuclease activity"/>
    <property type="evidence" value="ECO:0007669"/>
    <property type="project" value="InterPro"/>
</dbReference>
<dbReference type="GO" id="GO:0045926">
    <property type="term" value="P:negative regulation of growth"/>
    <property type="evidence" value="ECO:0000315"/>
    <property type="project" value="MTBBASE"/>
</dbReference>
<dbReference type="Gene3D" id="3.40.50.1010">
    <property type="entry name" value="5'-nuclease"/>
    <property type="match status" value="1"/>
</dbReference>
<dbReference type="HAMAP" id="MF_00265">
    <property type="entry name" value="VapC_Nob1"/>
    <property type="match status" value="1"/>
</dbReference>
<dbReference type="InterPro" id="IPR006226">
    <property type="entry name" value="Mtu_PIN"/>
</dbReference>
<dbReference type="InterPro" id="IPR029060">
    <property type="entry name" value="PIN-like_dom_sf"/>
</dbReference>
<dbReference type="InterPro" id="IPR002716">
    <property type="entry name" value="PIN_dom"/>
</dbReference>
<dbReference type="InterPro" id="IPR022907">
    <property type="entry name" value="VapC_family"/>
</dbReference>
<dbReference type="NCBIfam" id="TIGR00028">
    <property type="entry name" value="Mtu_PIN_fam"/>
    <property type="match status" value="1"/>
</dbReference>
<dbReference type="Pfam" id="PF01850">
    <property type="entry name" value="PIN"/>
    <property type="match status" value="1"/>
</dbReference>
<dbReference type="SUPFAM" id="SSF88723">
    <property type="entry name" value="PIN domain-like"/>
    <property type="match status" value="1"/>
</dbReference>
<sequence>MLLCDTNIWLALALSGHVHHRASRAWLDTINAPGVIHFCRATQQSLLRLLTNRTVLGAYGSPPLTNREAWAAYAAFLDDDRIVLAGAEPDGLEAQWRAFAVRQSPAPKVWMDAYLAAFALTGGFELVTTDTAFTQYGGIELRLLAK</sequence>
<accession>P9WF59</accession>
<accession>L0TBR4</accession>
<accession>O33215</accession>
<accession>Q7D6X2</accession>
<evidence type="ECO:0000255" key="1">
    <source>
        <dbReference type="HAMAP-Rule" id="MF_00265"/>
    </source>
</evidence>
<evidence type="ECO:0000269" key="2">
    <source>
    </source>
</evidence>
<evidence type="ECO:0000269" key="3">
    <source>
    </source>
</evidence>
<protein>
    <recommendedName>
        <fullName evidence="1">Ribonuclease VapC41</fullName>
        <shortName evidence="1">RNase VapC41</shortName>
        <ecNumber evidence="1">3.1.-.-</ecNumber>
    </recommendedName>
    <alternativeName>
        <fullName evidence="1">Toxin VapC41</fullName>
    </alternativeName>
</protein>
<name>VPC41_MYCTU</name>
<comment type="function">
    <text evidence="1 2">Toxic component of a type II toxin-antitoxin (TA) system. An RNase (By similarity). Upon expression in M.smegmatis inhibits colony formation. Its toxic effect is neutralized by coexpression with cognate antitoxin VapB41.</text>
</comment>
<comment type="cofactor">
    <cofactor evidence="1">
        <name>Mg(2+)</name>
        <dbReference type="ChEBI" id="CHEBI:18420"/>
    </cofactor>
</comment>
<comment type="subcellular location">
    <subcellularLocation>
        <location>Secreted</location>
    </subcellularLocation>
    <text evidence="3">Following 6 weeks of nutrient starvation.</text>
</comment>
<comment type="similarity">
    <text evidence="1">Belongs to the PINc/VapC protein family.</text>
</comment>
<organism>
    <name type="scientific">Mycobacterium tuberculosis (strain ATCC 25618 / H37Rv)</name>
    <dbReference type="NCBI Taxonomy" id="83332"/>
    <lineage>
        <taxon>Bacteria</taxon>
        <taxon>Bacillati</taxon>
        <taxon>Actinomycetota</taxon>
        <taxon>Actinomycetes</taxon>
        <taxon>Mycobacteriales</taxon>
        <taxon>Mycobacteriaceae</taxon>
        <taxon>Mycobacterium</taxon>
        <taxon>Mycobacterium tuberculosis complex</taxon>
    </lineage>
</organism>
<gene>
    <name evidence="1" type="primary">vapC41</name>
    <name type="ordered locus">Rv2602</name>
</gene>
<keyword id="KW-0378">Hydrolase</keyword>
<keyword id="KW-0460">Magnesium</keyword>
<keyword id="KW-0479">Metal-binding</keyword>
<keyword id="KW-0540">Nuclease</keyword>
<keyword id="KW-1185">Reference proteome</keyword>
<keyword id="KW-0964">Secreted</keyword>
<keyword id="KW-1277">Toxin-antitoxin system</keyword>
<proteinExistence type="evidence at protein level"/>